<protein>
    <recommendedName>
        <fullName evidence="1">Small ribosomal subunit protein uS8</fullName>
    </recommendedName>
    <alternativeName>
        <fullName evidence="2">30S ribosomal protein S8</fullName>
    </alternativeName>
</protein>
<organism>
    <name type="scientific">Prochlorococcus marinus (strain MIT 9312)</name>
    <dbReference type="NCBI Taxonomy" id="74546"/>
    <lineage>
        <taxon>Bacteria</taxon>
        <taxon>Bacillati</taxon>
        <taxon>Cyanobacteriota</taxon>
        <taxon>Cyanophyceae</taxon>
        <taxon>Synechococcales</taxon>
        <taxon>Prochlorococcaceae</taxon>
        <taxon>Prochlorococcus</taxon>
    </lineage>
</organism>
<proteinExistence type="inferred from homology"/>
<evidence type="ECO:0000255" key="1">
    <source>
        <dbReference type="HAMAP-Rule" id="MF_01302"/>
    </source>
</evidence>
<evidence type="ECO:0000305" key="2"/>
<keyword id="KW-0687">Ribonucleoprotein</keyword>
<keyword id="KW-0689">Ribosomal protein</keyword>
<keyword id="KW-0694">RNA-binding</keyword>
<keyword id="KW-0699">rRNA-binding</keyword>
<accession>Q318J7</accession>
<comment type="function">
    <text evidence="1">One of the primary rRNA binding proteins, it binds directly to 16S rRNA central domain where it helps coordinate assembly of the platform of the 30S subunit.</text>
</comment>
<comment type="subunit">
    <text evidence="1">Part of the 30S ribosomal subunit. Contacts proteins S5 and S12.</text>
</comment>
<comment type="similarity">
    <text evidence="1">Belongs to the universal ribosomal protein uS8 family.</text>
</comment>
<reference key="1">
    <citation type="journal article" date="2006" name="Science">
        <title>Genomic islands and the ecology and evolution of Prochlorococcus.</title>
        <authorList>
            <person name="Coleman M.L."/>
            <person name="Sullivan M.B."/>
            <person name="Martiny A.C."/>
            <person name="Steglich C."/>
            <person name="Barry K."/>
            <person name="Delong E.F."/>
            <person name="Chisholm S.W."/>
        </authorList>
    </citation>
    <scope>NUCLEOTIDE SEQUENCE [LARGE SCALE GENOMIC DNA]</scope>
    <source>
        <strain>MIT 9312</strain>
    </source>
</reference>
<name>RS8_PROM9</name>
<feature type="chain" id="PRO_0000228865" description="Small ribosomal subunit protein uS8">
    <location>
        <begin position="1"/>
        <end position="133"/>
    </location>
</feature>
<sequence>MSNHDPISDMLTRIRNASQKKHTTTTIPGSKMSLSIAKVLQKEGFISDINEEGEGYKSQIILSLKYSGKNKFPTIRSMQRVSKPGLRIYKNTRGLPKVLGGLGVAIISTSKGVMSDRDARKQGIGGEVLCYVY</sequence>
<dbReference type="EMBL" id="CP000111">
    <property type="protein sequence ID" value="ABB50698.1"/>
    <property type="molecule type" value="Genomic_DNA"/>
</dbReference>
<dbReference type="RefSeq" id="WP_011377180.1">
    <property type="nucleotide sequence ID" value="NC_007577.1"/>
</dbReference>
<dbReference type="SMR" id="Q318J7"/>
<dbReference type="STRING" id="74546.PMT9312_1637"/>
<dbReference type="KEGG" id="pmi:PMT9312_1637"/>
<dbReference type="eggNOG" id="COG0096">
    <property type="taxonomic scope" value="Bacteria"/>
</dbReference>
<dbReference type="HOGENOM" id="CLU_098428_0_2_3"/>
<dbReference type="OrthoDB" id="9802617at2"/>
<dbReference type="Proteomes" id="UP000002715">
    <property type="component" value="Chromosome"/>
</dbReference>
<dbReference type="GO" id="GO:1990904">
    <property type="term" value="C:ribonucleoprotein complex"/>
    <property type="evidence" value="ECO:0007669"/>
    <property type="project" value="UniProtKB-KW"/>
</dbReference>
<dbReference type="GO" id="GO:0005840">
    <property type="term" value="C:ribosome"/>
    <property type="evidence" value="ECO:0007669"/>
    <property type="project" value="UniProtKB-KW"/>
</dbReference>
<dbReference type="GO" id="GO:0019843">
    <property type="term" value="F:rRNA binding"/>
    <property type="evidence" value="ECO:0007669"/>
    <property type="project" value="UniProtKB-UniRule"/>
</dbReference>
<dbReference type="GO" id="GO:0003735">
    <property type="term" value="F:structural constituent of ribosome"/>
    <property type="evidence" value="ECO:0007669"/>
    <property type="project" value="InterPro"/>
</dbReference>
<dbReference type="GO" id="GO:0006412">
    <property type="term" value="P:translation"/>
    <property type="evidence" value="ECO:0007669"/>
    <property type="project" value="UniProtKB-UniRule"/>
</dbReference>
<dbReference type="FunFam" id="3.30.1370.30:FF:000002">
    <property type="entry name" value="30S ribosomal protein S8"/>
    <property type="match status" value="1"/>
</dbReference>
<dbReference type="FunFam" id="3.30.1490.10:FF:000001">
    <property type="entry name" value="30S ribosomal protein S8"/>
    <property type="match status" value="1"/>
</dbReference>
<dbReference type="Gene3D" id="3.30.1370.30">
    <property type="match status" value="1"/>
</dbReference>
<dbReference type="Gene3D" id="3.30.1490.10">
    <property type="match status" value="1"/>
</dbReference>
<dbReference type="HAMAP" id="MF_01302_B">
    <property type="entry name" value="Ribosomal_uS8_B"/>
    <property type="match status" value="1"/>
</dbReference>
<dbReference type="InterPro" id="IPR000630">
    <property type="entry name" value="Ribosomal_uS8"/>
</dbReference>
<dbReference type="InterPro" id="IPR047863">
    <property type="entry name" value="Ribosomal_uS8_CS"/>
</dbReference>
<dbReference type="InterPro" id="IPR035987">
    <property type="entry name" value="Ribosomal_uS8_sf"/>
</dbReference>
<dbReference type="NCBIfam" id="NF001109">
    <property type="entry name" value="PRK00136.1"/>
    <property type="match status" value="1"/>
</dbReference>
<dbReference type="PANTHER" id="PTHR11758">
    <property type="entry name" value="40S RIBOSOMAL PROTEIN S15A"/>
    <property type="match status" value="1"/>
</dbReference>
<dbReference type="Pfam" id="PF00410">
    <property type="entry name" value="Ribosomal_S8"/>
    <property type="match status" value="1"/>
</dbReference>
<dbReference type="SUPFAM" id="SSF56047">
    <property type="entry name" value="Ribosomal protein S8"/>
    <property type="match status" value="1"/>
</dbReference>
<dbReference type="PROSITE" id="PS00053">
    <property type="entry name" value="RIBOSOMAL_S8"/>
    <property type="match status" value="1"/>
</dbReference>
<gene>
    <name evidence="1" type="primary">rpsH</name>
    <name evidence="1" type="synonym">rps8</name>
    <name type="ordered locus">PMT9312_1637</name>
</gene>